<sequence>MAKQEYKQLPKRAEVHSATEQFKDTIKTSLGLDLFKGLGLTIKEFFSPSVTIHYPMEQLPLSPRYRAVHHLQRLLDSGSERCIGCGLCEKICTSNCIRIITHKGEDNRKKIDSYTINLGRCIYCGLCAEVCPELAIVMGNRFENASTQRSQYGSKSEFLTSEQDAKNCSHAEFLGFGAVSPNYNERMQATPLDYVQEPSKEESKEESPTSPESHKGDENV</sequence>
<dbReference type="EC" id="7.1.1.-" evidence="1"/>
<dbReference type="EMBL" id="AE001439">
    <property type="protein sequence ID" value="AAD06755.1"/>
    <property type="molecule type" value="Genomic_DNA"/>
</dbReference>
<dbReference type="PIR" id="B71839">
    <property type="entry name" value="B71839"/>
</dbReference>
<dbReference type="RefSeq" id="WP_001118530.1">
    <property type="nucleotide sequence ID" value="NC_000921.1"/>
</dbReference>
<dbReference type="SMR" id="Q9ZJV9"/>
<dbReference type="KEGG" id="hpj:jhp_1189"/>
<dbReference type="PATRIC" id="fig|85963.30.peg.1383"/>
<dbReference type="eggNOG" id="COG1143">
    <property type="taxonomic scope" value="Bacteria"/>
</dbReference>
<dbReference type="Proteomes" id="UP000000804">
    <property type="component" value="Chromosome"/>
</dbReference>
<dbReference type="GO" id="GO:0005886">
    <property type="term" value="C:plasma membrane"/>
    <property type="evidence" value="ECO:0007669"/>
    <property type="project" value="UniProtKB-SubCell"/>
</dbReference>
<dbReference type="GO" id="GO:0051539">
    <property type="term" value="F:4 iron, 4 sulfur cluster binding"/>
    <property type="evidence" value="ECO:0007669"/>
    <property type="project" value="UniProtKB-KW"/>
</dbReference>
<dbReference type="GO" id="GO:0005506">
    <property type="term" value="F:iron ion binding"/>
    <property type="evidence" value="ECO:0007669"/>
    <property type="project" value="UniProtKB-UniRule"/>
</dbReference>
<dbReference type="GO" id="GO:0050136">
    <property type="term" value="F:NADH:ubiquinone reductase (non-electrogenic) activity"/>
    <property type="evidence" value="ECO:0007669"/>
    <property type="project" value="UniProtKB-UniRule"/>
</dbReference>
<dbReference type="GO" id="GO:0048038">
    <property type="term" value="F:quinone binding"/>
    <property type="evidence" value="ECO:0007669"/>
    <property type="project" value="UniProtKB-KW"/>
</dbReference>
<dbReference type="GO" id="GO:0009060">
    <property type="term" value="P:aerobic respiration"/>
    <property type="evidence" value="ECO:0007669"/>
    <property type="project" value="TreeGrafter"/>
</dbReference>
<dbReference type="FunFam" id="3.30.70.3270:FF:000011">
    <property type="entry name" value="NADH-quinone oxidoreductase subunit I"/>
    <property type="match status" value="1"/>
</dbReference>
<dbReference type="Gene3D" id="3.30.70.3270">
    <property type="match status" value="1"/>
</dbReference>
<dbReference type="HAMAP" id="MF_01351">
    <property type="entry name" value="NDH1_NuoI"/>
    <property type="match status" value="1"/>
</dbReference>
<dbReference type="InterPro" id="IPR017896">
    <property type="entry name" value="4Fe4S_Fe-S-bd"/>
</dbReference>
<dbReference type="InterPro" id="IPR017900">
    <property type="entry name" value="4Fe4S_Fe_S_CS"/>
</dbReference>
<dbReference type="InterPro" id="IPR010226">
    <property type="entry name" value="NADH_quinone_OxRdtase_chainI"/>
</dbReference>
<dbReference type="NCBIfam" id="TIGR01971">
    <property type="entry name" value="NuoI"/>
    <property type="match status" value="1"/>
</dbReference>
<dbReference type="NCBIfam" id="NF004542">
    <property type="entry name" value="PRK05888.2-3"/>
    <property type="match status" value="1"/>
</dbReference>
<dbReference type="NCBIfam" id="NF004544">
    <property type="entry name" value="PRK05888.2-6"/>
    <property type="match status" value="1"/>
</dbReference>
<dbReference type="PANTHER" id="PTHR10849:SF20">
    <property type="entry name" value="NADH DEHYDROGENASE [UBIQUINONE] IRON-SULFUR PROTEIN 8, MITOCHONDRIAL"/>
    <property type="match status" value="1"/>
</dbReference>
<dbReference type="PANTHER" id="PTHR10849">
    <property type="entry name" value="NADH DEHYDROGENASE UBIQUINONE IRON-SULFUR PROTEIN 8, MITOCHONDRIAL"/>
    <property type="match status" value="1"/>
</dbReference>
<dbReference type="Pfam" id="PF12838">
    <property type="entry name" value="Fer4_7"/>
    <property type="match status" value="1"/>
</dbReference>
<dbReference type="SUPFAM" id="SSF54862">
    <property type="entry name" value="4Fe-4S ferredoxins"/>
    <property type="match status" value="1"/>
</dbReference>
<dbReference type="PROSITE" id="PS00198">
    <property type="entry name" value="4FE4S_FER_1"/>
    <property type="match status" value="1"/>
</dbReference>
<dbReference type="PROSITE" id="PS51379">
    <property type="entry name" value="4FE4S_FER_2"/>
    <property type="match status" value="2"/>
</dbReference>
<gene>
    <name evidence="1" type="primary">nuoI</name>
    <name type="ordered locus">jhp_1189</name>
</gene>
<keyword id="KW-0004">4Fe-4S</keyword>
<keyword id="KW-0997">Cell inner membrane</keyword>
<keyword id="KW-1003">Cell membrane</keyword>
<keyword id="KW-0408">Iron</keyword>
<keyword id="KW-0411">Iron-sulfur</keyword>
<keyword id="KW-0472">Membrane</keyword>
<keyword id="KW-0479">Metal-binding</keyword>
<keyword id="KW-0520">NAD</keyword>
<keyword id="KW-0874">Quinone</keyword>
<keyword id="KW-0677">Repeat</keyword>
<keyword id="KW-1278">Translocase</keyword>
<keyword id="KW-0830">Ubiquinone</keyword>
<organism>
    <name type="scientific">Helicobacter pylori (strain J99 / ATCC 700824)</name>
    <name type="common">Campylobacter pylori J99</name>
    <dbReference type="NCBI Taxonomy" id="85963"/>
    <lineage>
        <taxon>Bacteria</taxon>
        <taxon>Pseudomonadati</taxon>
        <taxon>Campylobacterota</taxon>
        <taxon>Epsilonproteobacteria</taxon>
        <taxon>Campylobacterales</taxon>
        <taxon>Helicobacteraceae</taxon>
        <taxon>Helicobacter</taxon>
    </lineage>
</organism>
<accession>Q9ZJV9</accession>
<name>NUOI_HELPJ</name>
<feature type="chain" id="PRO_0000245712" description="NADH-quinone oxidoreductase subunit I">
    <location>
        <begin position="1"/>
        <end position="220"/>
    </location>
</feature>
<feature type="domain" description="4Fe-4S ferredoxin-type 1" evidence="1">
    <location>
        <begin position="71"/>
        <end position="102"/>
    </location>
</feature>
<feature type="domain" description="4Fe-4S ferredoxin-type 2" evidence="1">
    <location>
        <begin position="112"/>
        <end position="141"/>
    </location>
</feature>
<feature type="region of interest" description="Disordered" evidence="2">
    <location>
        <begin position="187"/>
        <end position="220"/>
    </location>
</feature>
<feature type="compositionally biased region" description="Basic and acidic residues" evidence="2">
    <location>
        <begin position="198"/>
        <end position="220"/>
    </location>
</feature>
<feature type="binding site" evidence="1">
    <location>
        <position position="82"/>
    </location>
    <ligand>
        <name>[4Fe-4S] cluster</name>
        <dbReference type="ChEBI" id="CHEBI:49883"/>
        <label>1</label>
    </ligand>
</feature>
<feature type="binding site" evidence="1">
    <location>
        <position position="85"/>
    </location>
    <ligand>
        <name>[4Fe-4S] cluster</name>
        <dbReference type="ChEBI" id="CHEBI:49883"/>
        <label>1</label>
    </ligand>
</feature>
<feature type="binding site" evidence="1">
    <location>
        <position position="88"/>
    </location>
    <ligand>
        <name>[4Fe-4S] cluster</name>
        <dbReference type="ChEBI" id="CHEBI:49883"/>
        <label>1</label>
    </ligand>
</feature>
<feature type="binding site" evidence="1">
    <location>
        <position position="92"/>
    </location>
    <ligand>
        <name>[4Fe-4S] cluster</name>
        <dbReference type="ChEBI" id="CHEBI:49883"/>
        <label>2</label>
    </ligand>
</feature>
<feature type="binding site" evidence="1">
    <location>
        <position position="121"/>
    </location>
    <ligand>
        <name>[4Fe-4S] cluster</name>
        <dbReference type="ChEBI" id="CHEBI:49883"/>
        <label>2</label>
    </ligand>
</feature>
<feature type="binding site" evidence="1">
    <location>
        <position position="124"/>
    </location>
    <ligand>
        <name>[4Fe-4S] cluster</name>
        <dbReference type="ChEBI" id="CHEBI:49883"/>
        <label>2</label>
    </ligand>
</feature>
<feature type="binding site" evidence="1">
    <location>
        <position position="127"/>
    </location>
    <ligand>
        <name>[4Fe-4S] cluster</name>
        <dbReference type="ChEBI" id="CHEBI:49883"/>
        <label>2</label>
    </ligand>
</feature>
<feature type="binding site" evidence="1">
    <location>
        <position position="131"/>
    </location>
    <ligand>
        <name>[4Fe-4S] cluster</name>
        <dbReference type="ChEBI" id="CHEBI:49883"/>
        <label>1</label>
    </ligand>
</feature>
<reference key="1">
    <citation type="journal article" date="1999" name="Nature">
        <title>Genomic sequence comparison of two unrelated isolates of the human gastric pathogen Helicobacter pylori.</title>
        <authorList>
            <person name="Alm R.A."/>
            <person name="Ling L.-S.L."/>
            <person name="Moir D.T."/>
            <person name="King B.L."/>
            <person name="Brown E.D."/>
            <person name="Doig P.C."/>
            <person name="Smith D.R."/>
            <person name="Noonan B."/>
            <person name="Guild B.C."/>
            <person name="deJonge B.L."/>
            <person name="Carmel G."/>
            <person name="Tummino P.J."/>
            <person name="Caruso A."/>
            <person name="Uria-Nickelsen M."/>
            <person name="Mills D.M."/>
            <person name="Ives C."/>
            <person name="Gibson R."/>
            <person name="Merberg D."/>
            <person name="Mills S.D."/>
            <person name="Jiang Q."/>
            <person name="Taylor D.E."/>
            <person name="Vovis G.F."/>
            <person name="Trust T.J."/>
        </authorList>
    </citation>
    <scope>NUCLEOTIDE SEQUENCE [LARGE SCALE GENOMIC DNA]</scope>
    <source>
        <strain>J99 / ATCC 700824</strain>
    </source>
</reference>
<comment type="function">
    <text evidence="1">NDH-1 shuttles electrons from NADH, via FMN and iron-sulfur (Fe-S) centers, to quinones in the respiratory chain. The immediate electron acceptor for the enzyme in this species is believed to be ubiquinone. Couples the redox reaction to proton translocation (for every two electrons transferred, four hydrogen ions are translocated across the cytoplasmic membrane), and thus conserves the redox energy in a proton gradient.</text>
</comment>
<comment type="catalytic activity">
    <reaction evidence="1">
        <text>a quinone + NADH + 5 H(+)(in) = a quinol + NAD(+) + 4 H(+)(out)</text>
        <dbReference type="Rhea" id="RHEA:57888"/>
        <dbReference type="ChEBI" id="CHEBI:15378"/>
        <dbReference type="ChEBI" id="CHEBI:24646"/>
        <dbReference type="ChEBI" id="CHEBI:57540"/>
        <dbReference type="ChEBI" id="CHEBI:57945"/>
        <dbReference type="ChEBI" id="CHEBI:132124"/>
    </reaction>
</comment>
<comment type="cofactor">
    <cofactor evidence="1">
        <name>[4Fe-4S] cluster</name>
        <dbReference type="ChEBI" id="CHEBI:49883"/>
    </cofactor>
    <text evidence="1">Binds 2 [4Fe-4S] clusters per subunit.</text>
</comment>
<comment type="subunit">
    <text evidence="1">NDH-1 is composed of 14 different subunits. Subunits NuoA, H, J, K, L, M, N constitute the membrane sector of the complex.</text>
</comment>
<comment type="subcellular location">
    <subcellularLocation>
        <location evidence="1">Cell inner membrane</location>
        <topology evidence="1">Peripheral membrane protein</topology>
    </subcellularLocation>
</comment>
<comment type="similarity">
    <text evidence="1">Belongs to the complex I 23 kDa subunit family.</text>
</comment>
<evidence type="ECO:0000255" key="1">
    <source>
        <dbReference type="HAMAP-Rule" id="MF_01351"/>
    </source>
</evidence>
<evidence type="ECO:0000256" key="2">
    <source>
        <dbReference type="SAM" id="MobiDB-lite"/>
    </source>
</evidence>
<protein>
    <recommendedName>
        <fullName evidence="1">NADH-quinone oxidoreductase subunit I</fullName>
        <ecNumber evidence="1">7.1.1.-</ecNumber>
    </recommendedName>
    <alternativeName>
        <fullName evidence="1">NADH dehydrogenase I subunit I</fullName>
    </alternativeName>
    <alternativeName>
        <fullName evidence="1">NDH-1 subunit I</fullName>
    </alternativeName>
</protein>
<proteinExistence type="inferred from homology"/>